<name>GALT_LACCB</name>
<reference key="1">
    <citation type="submission" date="2008-06" db="EMBL/GenBank/DDBJ databases">
        <title>Lactobacillus casei BL23 complete genome sequence.</title>
        <authorList>
            <person name="Maze A."/>
            <person name="Boel G."/>
            <person name="Bourand A."/>
            <person name="Loux V."/>
            <person name="Gibrat J.F."/>
            <person name="Zuniga M."/>
            <person name="Hartke A."/>
            <person name="Deutscher J."/>
        </authorList>
    </citation>
    <scope>NUCLEOTIDE SEQUENCE [LARGE SCALE GENOMIC DNA]</scope>
    <source>
        <strain>BL23</strain>
    </source>
</reference>
<sequence length="486" mass="54146">MTAISNHVGTIVKLNPDYTQMDAVYLTNKLLNLIGDAALDLPGDADPLTNLDLMVKAAQENGKIPDSQAARQILEAQLMDLATPTPSRINQLFWDKYQAGPRVATDWFFALSRANNYIQTRAIAKNVVFPAKTEYGDLEITINLSKPEKDPKDIAAAAHAAQSGYPACALCLQTEGYAGRTDFAARTNHRIIRFLLGGKTWGFQYSPYAYFNEHAIFLDAIHEPMVIDQSTFSNLLAIVSMFPTYFVGSNADLPIVGGSMLTHEHYQGGRHTFPMAKAPIETQVEISGHPHVFAGIVKWPMSVIRLVSADSDELINAAEHVRQVWNQYTDETVDVRAFVDGKPHHTVTPIARRVGSEFQLDLVLRDNQTSAEHPDGIFHPHQDVQHIKKENIGLIEVMGRAILPARLKSELAEVQKYLLGEANTMKPMHKTWADQLKAKYDWTPENVEAQMQAAVGRVFARVLEDAGVFKRDEVGQKAFARFCRAL</sequence>
<accession>B3W7I7</accession>
<evidence type="ECO:0000255" key="1">
    <source>
        <dbReference type="HAMAP-Rule" id="MF_00571"/>
    </source>
</evidence>
<protein>
    <recommendedName>
        <fullName evidence="1">Galactose-1-phosphate uridylyltransferase</fullName>
        <shortName evidence="1">Gal-1-P uridylyltransferase</shortName>
        <ecNumber evidence="1">2.7.7.12</ecNumber>
    </recommendedName>
    <alternativeName>
        <fullName evidence="1">UDP-glucose--hexose-1-phosphate uridylyltransferase</fullName>
    </alternativeName>
</protein>
<comment type="catalytic activity">
    <reaction evidence="1">
        <text>alpha-D-galactose 1-phosphate + UDP-alpha-D-glucose = alpha-D-glucose 1-phosphate + UDP-alpha-D-galactose</text>
        <dbReference type="Rhea" id="RHEA:13989"/>
        <dbReference type="ChEBI" id="CHEBI:58336"/>
        <dbReference type="ChEBI" id="CHEBI:58601"/>
        <dbReference type="ChEBI" id="CHEBI:58885"/>
        <dbReference type="ChEBI" id="CHEBI:66914"/>
        <dbReference type="EC" id="2.7.7.12"/>
    </reaction>
</comment>
<comment type="pathway">
    <text evidence="1">Carbohydrate metabolism; galactose metabolism.</text>
</comment>
<comment type="subcellular location">
    <subcellularLocation>
        <location evidence="1">Cytoplasm</location>
    </subcellularLocation>
</comment>
<comment type="similarity">
    <text evidence="1">Belongs to the galactose-1-phosphate uridylyltransferase type 2 family.</text>
</comment>
<keyword id="KW-0119">Carbohydrate metabolism</keyword>
<keyword id="KW-0963">Cytoplasm</keyword>
<keyword id="KW-0299">Galactose metabolism</keyword>
<keyword id="KW-0548">Nucleotidyltransferase</keyword>
<keyword id="KW-0808">Transferase</keyword>
<proteinExistence type="inferred from homology"/>
<gene>
    <name evidence="1" type="primary">galT</name>
    <name type="ordered locus">LCABL_07320</name>
</gene>
<organism>
    <name type="scientific">Lacticaseibacillus casei (strain BL23)</name>
    <name type="common">Lactobacillus casei</name>
    <dbReference type="NCBI Taxonomy" id="543734"/>
    <lineage>
        <taxon>Bacteria</taxon>
        <taxon>Bacillati</taxon>
        <taxon>Bacillota</taxon>
        <taxon>Bacilli</taxon>
        <taxon>Lactobacillales</taxon>
        <taxon>Lactobacillaceae</taxon>
        <taxon>Lacticaseibacillus</taxon>
    </lineage>
</organism>
<feature type="chain" id="PRO_1000129493" description="Galactose-1-phosphate uridylyltransferase">
    <location>
        <begin position="1"/>
        <end position="486"/>
    </location>
</feature>
<dbReference type="EC" id="2.7.7.12" evidence="1"/>
<dbReference type="EMBL" id="FM177140">
    <property type="protein sequence ID" value="CAQ65857.1"/>
    <property type="molecule type" value="Genomic_DNA"/>
</dbReference>
<dbReference type="KEGG" id="lcb:LCABL_07320"/>
<dbReference type="HOGENOM" id="CLU_047799_0_0_9"/>
<dbReference type="UniPathway" id="UPA00214"/>
<dbReference type="GO" id="GO:0005737">
    <property type="term" value="C:cytoplasm"/>
    <property type="evidence" value="ECO:0007669"/>
    <property type="project" value="UniProtKB-SubCell"/>
</dbReference>
<dbReference type="GO" id="GO:0008108">
    <property type="term" value="F:UDP-glucose:hexose-1-phosphate uridylyltransferase activity"/>
    <property type="evidence" value="ECO:0007669"/>
    <property type="project" value="UniProtKB-UniRule"/>
</dbReference>
<dbReference type="GO" id="GO:0006012">
    <property type="term" value="P:galactose metabolic process"/>
    <property type="evidence" value="ECO:0007669"/>
    <property type="project" value="UniProtKB-UniRule"/>
</dbReference>
<dbReference type="HAMAP" id="MF_00571">
    <property type="entry name" value="GalP_UDP_trans"/>
    <property type="match status" value="1"/>
</dbReference>
<dbReference type="InterPro" id="IPR000766">
    <property type="entry name" value="GalP_uridyl_Trfase_II"/>
</dbReference>
<dbReference type="InterPro" id="IPR023425">
    <property type="entry name" value="GalP_uridyl_Trfase_II_CS"/>
</dbReference>
<dbReference type="InterPro" id="IPR005850">
    <property type="entry name" value="GalP_Utransf_C"/>
</dbReference>
<dbReference type="InterPro" id="IPR005849">
    <property type="entry name" value="GalP_Utransf_N"/>
</dbReference>
<dbReference type="NCBIfam" id="TIGR01239">
    <property type="entry name" value="galT_2"/>
    <property type="match status" value="1"/>
</dbReference>
<dbReference type="NCBIfam" id="NF003630">
    <property type="entry name" value="PRK05270.1-3"/>
    <property type="match status" value="1"/>
</dbReference>
<dbReference type="NCBIfam" id="NF003633">
    <property type="entry name" value="PRK05270.2-2"/>
    <property type="match status" value="1"/>
</dbReference>
<dbReference type="PANTHER" id="PTHR39191:SF1">
    <property type="entry name" value="DUF4922 DOMAIN-CONTAINING PROTEIN"/>
    <property type="match status" value="1"/>
</dbReference>
<dbReference type="PANTHER" id="PTHR39191">
    <property type="entry name" value="GALACTOSE-1-PHOSPHATE URIDYLYLTRANSFERASE"/>
    <property type="match status" value="1"/>
</dbReference>
<dbReference type="Pfam" id="PF02744">
    <property type="entry name" value="GalP_UDP_tr_C"/>
    <property type="match status" value="1"/>
</dbReference>
<dbReference type="Pfam" id="PF01087">
    <property type="entry name" value="GalP_UDP_transf"/>
    <property type="match status" value="1"/>
</dbReference>
<dbReference type="PIRSF" id="PIRSF006005">
    <property type="entry name" value="GalT_BS"/>
    <property type="match status" value="1"/>
</dbReference>
<dbReference type="PROSITE" id="PS01163">
    <property type="entry name" value="GAL_P_UDP_TRANSF_II"/>
    <property type="match status" value="1"/>
</dbReference>